<sequence>MLDPKVIVALDYPNQDAALAFVDRIEPGSCRLKVGKEMFTLYGPDFVRKLHECGHSVFLDLKFHDIPNTCSRAVAAAAELGVWMVNVHASGGERMMAASRDILEPYGKDRPLLIAVTVLTSMEASDLAGIGIACAPQEQVLNLATLTKNSGLDGVVCSAQESTMLKSALGKEFQLITPGIRPVGSAAGDQRRVMTPVEAVSAGSDYLVIGRPITQATDPSAVLAEINQSLA</sequence>
<dbReference type="EC" id="4.1.1.23" evidence="1"/>
<dbReference type="EMBL" id="CR378671">
    <property type="protein sequence ID" value="CAG20829.1"/>
    <property type="molecule type" value="Genomic_DNA"/>
</dbReference>
<dbReference type="RefSeq" id="WP_011219112.1">
    <property type="nucleotide sequence ID" value="NC_006370.1"/>
</dbReference>
<dbReference type="SMR" id="Q6LPE7"/>
<dbReference type="STRING" id="298386.PBPRA2446"/>
<dbReference type="KEGG" id="ppr:PBPRA2446"/>
<dbReference type="eggNOG" id="COG0284">
    <property type="taxonomic scope" value="Bacteria"/>
</dbReference>
<dbReference type="HOGENOM" id="CLU_067069_0_0_6"/>
<dbReference type="UniPathway" id="UPA00070">
    <property type="reaction ID" value="UER00120"/>
</dbReference>
<dbReference type="Proteomes" id="UP000000593">
    <property type="component" value="Chromosome 1"/>
</dbReference>
<dbReference type="GO" id="GO:0005829">
    <property type="term" value="C:cytosol"/>
    <property type="evidence" value="ECO:0007669"/>
    <property type="project" value="TreeGrafter"/>
</dbReference>
<dbReference type="GO" id="GO:0004590">
    <property type="term" value="F:orotidine-5'-phosphate decarboxylase activity"/>
    <property type="evidence" value="ECO:0007669"/>
    <property type="project" value="UniProtKB-UniRule"/>
</dbReference>
<dbReference type="GO" id="GO:0006207">
    <property type="term" value="P:'de novo' pyrimidine nucleobase biosynthetic process"/>
    <property type="evidence" value="ECO:0007669"/>
    <property type="project" value="InterPro"/>
</dbReference>
<dbReference type="GO" id="GO:0044205">
    <property type="term" value="P:'de novo' UMP biosynthetic process"/>
    <property type="evidence" value="ECO:0007669"/>
    <property type="project" value="UniProtKB-UniRule"/>
</dbReference>
<dbReference type="CDD" id="cd04725">
    <property type="entry name" value="OMP_decarboxylase_like"/>
    <property type="match status" value="1"/>
</dbReference>
<dbReference type="FunFam" id="3.20.20.70:FF:000015">
    <property type="entry name" value="Orotidine 5'-phosphate decarboxylase"/>
    <property type="match status" value="1"/>
</dbReference>
<dbReference type="Gene3D" id="3.20.20.70">
    <property type="entry name" value="Aldolase class I"/>
    <property type="match status" value="1"/>
</dbReference>
<dbReference type="HAMAP" id="MF_01200_B">
    <property type="entry name" value="OMPdecase_type1_B"/>
    <property type="match status" value="1"/>
</dbReference>
<dbReference type="InterPro" id="IPR013785">
    <property type="entry name" value="Aldolase_TIM"/>
</dbReference>
<dbReference type="InterPro" id="IPR014732">
    <property type="entry name" value="OMPdecase"/>
</dbReference>
<dbReference type="InterPro" id="IPR018089">
    <property type="entry name" value="OMPdecase_AS"/>
</dbReference>
<dbReference type="InterPro" id="IPR047596">
    <property type="entry name" value="OMPdecase_bac"/>
</dbReference>
<dbReference type="InterPro" id="IPR001754">
    <property type="entry name" value="OMPdeCOase_dom"/>
</dbReference>
<dbReference type="InterPro" id="IPR011060">
    <property type="entry name" value="RibuloseP-bd_barrel"/>
</dbReference>
<dbReference type="NCBIfam" id="NF001273">
    <property type="entry name" value="PRK00230.1"/>
    <property type="match status" value="1"/>
</dbReference>
<dbReference type="NCBIfam" id="TIGR01740">
    <property type="entry name" value="pyrF"/>
    <property type="match status" value="1"/>
</dbReference>
<dbReference type="PANTHER" id="PTHR32119">
    <property type="entry name" value="OROTIDINE 5'-PHOSPHATE DECARBOXYLASE"/>
    <property type="match status" value="1"/>
</dbReference>
<dbReference type="PANTHER" id="PTHR32119:SF2">
    <property type="entry name" value="OROTIDINE 5'-PHOSPHATE DECARBOXYLASE"/>
    <property type="match status" value="1"/>
</dbReference>
<dbReference type="Pfam" id="PF00215">
    <property type="entry name" value="OMPdecase"/>
    <property type="match status" value="1"/>
</dbReference>
<dbReference type="SMART" id="SM00934">
    <property type="entry name" value="OMPdecase"/>
    <property type="match status" value="1"/>
</dbReference>
<dbReference type="SUPFAM" id="SSF51366">
    <property type="entry name" value="Ribulose-phoshate binding barrel"/>
    <property type="match status" value="1"/>
</dbReference>
<dbReference type="PROSITE" id="PS00156">
    <property type="entry name" value="OMPDECASE"/>
    <property type="match status" value="1"/>
</dbReference>
<feature type="chain" id="PRO_0000241884" description="Orotidine 5'-phosphate decarboxylase">
    <location>
        <begin position="1"/>
        <end position="231"/>
    </location>
</feature>
<feature type="active site" description="Proton donor" evidence="1">
    <location>
        <position position="62"/>
    </location>
</feature>
<feature type="binding site" evidence="1">
    <location>
        <position position="11"/>
    </location>
    <ligand>
        <name>substrate</name>
    </ligand>
</feature>
<feature type="binding site" evidence="1">
    <location>
        <position position="33"/>
    </location>
    <ligand>
        <name>substrate</name>
    </ligand>
</feature>
<feature type="binding site" evidence="1">
    <location>
        <begin position="60"/>
        <end position="69"/>
    </location>
    <ligand>
        <name>substrate</name>
    </ligand>
</feature>
<feature type="binding site" evidence="1">
    <location>
        <position position="120"/>
    </location>
    <ligand>
        <name>substrate</name>
    </ligand>
</feature>
<feature type="binding site" evidence="1">
    <location>
        <position position="181"/>
    </location>
    <ligand>
        <name>substrate</name>
    </ligand>
</feature>
<feature type="binding site" evidence="1">
    <location>
        <position position="190"/>
    </location>
    <ligand>
        <name>substrate</name>
    </ligand>
</feature>
<feature type="binding site" evidence="1">
    <location>
        <position position="210"/>
    </location>
    <ligand>
        <name>substrate</name>
    </ligand>
</feature>
<feature type="binding site" evidence="1">
    <location>
        <position position="211"/>
    </location>
    <ligand>
        <name>substrate</name>
    </ligand>
</feature>
<evidence type="ECO:0000255" key="1">
    <source>
        <dbReference type="HAMAP-Rule" id="MF_01200"/>
    </source>
</evidence>
<reference key="1">
    <citation type="journal article" date="2005" name="Science">
        <title>Life at depth: Photobacterium profundum genome sequence and expression analysis.</title>
        <authorList>
            <person name="Vezzi A."/>
            <person name="Campanaro S."/>
            <person name="D'Angelo M."/>
            <person name="Simonato F."/>
            <person name="Vitulo N."/>
            <person name="Lauro F.M."/>
            <person name="Cestaro A."/>
            <person name="Malacrida G."/>
            <person name="Simionati B."/>
            <person name="Cannata N."/>
            <person name="Romualdi C."/>
            <person name="Bartlett D.H."/>
            <person name="Valle G."/>
        </authorList>
    </citation>
    <scope>NUCLEOTIDE SEQUENCE [LARGE SCALE GENOMIC DNA]</scope>
    <source>
        <strain>ATCC BAA-1253 / SS9</strain>
    </source>
</reference>
<organism>
    <name type="scientific">Photobacterium profundum (strain SS9)</name>
    <dbReference type="NCBI Taxonomy" id="298386"/>
    <lineage>
        <taxon>Bacteria</taxon>
        <taxon>Pseudomonadati</taxon>
        <taxon>Pseudomonadota</taxon>
        <taxon>Gammaproteobacteria</taxon>
        <taxon>Vibrionales</taxon>
        <taxon>Vibrionaceae</taxon>
        <taxon>Photobacterium</taxon>
    </lineage>
</organism>
<name>PYRF_PHOPR</name>
<protein>
    <recommendedName>
        <fullName evidence="1">Orotidine 5'-phosphate decarboxylase</fullName>
        <ecNumber evidence="1">4.1.1.23</ecNumber>
    </recommendedName>
    <alternativeName>
        <fullName evidence="1">OMP decarboxylase</fullName>
        <shortName evidence="1">OMPDCase</shortName>
        <shortName evidence="1">OMPdecase</shortName>
    </alternativeName>
</protein>
<proteinExistence type="inferred from homology"/>
<comment type="function">
    <text evidence="1">Catalyzes the decarboxylation of orotidine 5'-monophosphate (OMP) to uridine 5'-monophosphate (UMP).</text>
</comment>
<comment type="catalytic activity">
    <reaction evidence="1">
        <text>orotidine 5'-phosphate + H(+) = UMP + CO2</text>
        <dbReference type="Rhea" id="RHEA:11596"/>
        <dbReference type="ChEBI" id="CHEBI:15378"/>
        <dbReference type="ChEBI" id="CHEBI:16526"/>
        <dbReference type="ChEBI" id="CHEBI:57538"/>
        <dbReference type="ChEBI" id="CHEBI:57865"/>
        <dbReference type="EC" id="4.1.1.23"/>
    </reaction>
</comment>
<comment type="pathway">
    <text evidence="1">Pyrimidine metabolism; UMP biosynthesis via de novo pathway; UMP from orotate: step 2/2.</text>
</comment>
<comment type="subunit">
    <text evidence="1">Homodimer.</text>
</comment>
<comment type="similarity">
    <text evidence="1">Belongs to the OMP decarboxylase family. Type 1 subfamily.</text>
</comment>
<accession>Q6LPE7</accession>
<keyword id="KW-0210">Decarboxylase</keyword>
<keyword id="KW-0456">Lyase</keyword>
<keyword id="KW-0665">Pyrimidine biosynthesis</keyword>
<keyword id="KW-1185">Reference proteome</keyword>
<gene>
    <name evidence="1" type="primary">pyrF</name>
    <name type="ordered locus">PBPRA2446</name>
</gene>